<feature type="chain" id="PRO_0000097908" description="Redox-sensing transcriptional repressor Rex">
    <location>
        <begin position="1"/>
        <end position="211"/>
    </location>
</feature>
<feature type="DNA-binding region" description="H-T-H motif" evidence="1">
    <location>
        <begin position="17"/>
        <end position="56"/>
    </location>
</feature>
<feature type="binding site" evidence="1">
    <location>
        <begin position="91"/>
        <end position="96"/>
    </location>
    <ligand>
        <name>NAD(+)</name>
        <dbReference type="ChEBI" id="CHEBI:57540"/>
    </ligand>
</feature>
<name>REX_STAAW</name>
<reference key="1">
    <citation type="journal article" date="2002" name="Lancet">
        <title>Genome and virulence determinants of high virulence community-acquired MRSA.</title>
        <authorList>
            <person name="Baba T."/>
            <person name="Takeuchi F."/>
            <person name="Kuroda M."/>
            <person name="Yuzawa H."/>
            <person name="Aoki K."/>
            <person name="Oguchi A."/>
            <person name="Nagai Y."/>
            <person name="Iwama N."/>
            <person name="Asano K."/>
            <person name="Naimi T."/>
            <person name="Kuroda H."/>
            <person name="Cui L."/>
            <person name="Yamamoto K."/>
            <person name="Hiramatsu K."/>
        </authorList>
    </citation>
    <scope>NUCLEOTIDE SEQUENCE [LARGE SCALE GENOMIC DNA]</scope>
    <source>
        <strain>MW2</strain>
    </source>
</reference>
<organism>
    <name type="scientific">Staphylococcus aureus (strain MW2)</name>
    <dbReference type="NCBI Taxonomy" id="196620"/>
    <lineage>
        <taxon>Bacteria</taxon>
        <taxon>Bacillati</taxon>
        <taxon>Bacillota</taxon>
        <taxon>Bacilli</taxon>
        <taxon>Bacillales</taxon>
        <taxon>Staphylococcaceae</taxon>
        <taxon>Staphylococcus</taxon>
    </lineage>
</organism>
<protein>
    <recommendedName>
        <fullName evidence="1">Redox-sensing transcriptional repressor Rex</fullName>
    </recommendedName>
</protein>
<comment type="function">
    <text evidence="1">Modulates transcription in response to changes in cellular NADH/NAD(+) redox state.</text>
</comment>
<comment type="subunit">
    <text evidence="1">Homodimer.</text>
</comment>
<comment type="subcellular location">
    <subcellularLocation>
        <location evidence="1">Cytoplasm</location>
    </subcellularLocation>
</comment>
<comment type="similarity">
    <text evidence="1">Belongs to the transcriptional regulatory Rex family.</text>
</comment>
<gene>
    <name evidence="1" type="primary">rex</name>
    <name type="ordered locus">MW1970</name>
</gene>
<evidence type="ECO:0000255" key="1">
    <source>
        <dbReference type="HAMAP-Rule" id="MF_01131"/>
    </source>
</evidence>
<keyword id="KW-0963">Cytoplasm</keyword>
<keyword id="KW-0238">DNA-binding</keyword>
<keyword id="KW-0520">NAD</keyword>
<keyword id="KW-0678">Repressor</keyword>
<keyword id="KW-0804">Transcription</keyword>
<keyword id="KW-0805">Transcription regulation</keyword>
<dbReference type="EMBL" id="BA000033">
    <property type="protein sequence ID" value="BAB95835.1"/>
    <property type="molecule type" value="Genomic_DNA"/>
</dbReference>
<dbReference type="RefSeq" id="WP_001283612.1">
    <property type="nucleotide sequence ID" value="NC_003923.1"/>
</dbReference>
<dbReference type="SMR" id="P60387"/>
<dbReference type="KEGG" id="sam:MW1970"/>
<dbReference type="HOGENOM" id="CLU_061534_1_1_9"/>
<dbReference type="GO" id="GO:0005737">
    <property type="term" value="C:cytoplasm"/>
    <property type="evidence" value="ECO:0007669"/>
    <property type="project" value="UniProtKB-SubCell"/>
</dbReference>
<dbReference type="GO" id="GO:0003677">
    <property type="term" value="F:DNA binding"/>
    <property type="evidence" value="ECO:0007669"/>
    <property type="project" value="UniProtKB-UniRule"/>
</dbReference>
<dbReference type="GO" id="GO:0003700">
    <property type="term" value="F:DNA-binding transcription factor activity"/>
    <property type="evidence" value="ECO:0007669"/>
    <property type="project" value="UniProtKB-UniRule"/>
</dbReference>
<dbReference type="GO" id="GO:0045892">
    <property type="term" value="P:negative regulation of DNA-templated transcription"/>
    <property type="evidence" value="ECO:0007669"/>
    <property type="project" value="InterPro"/>
</dbReference>
<dbReference type="GO" id="GO:0051775">
    <property type="term" value="P:response to redox state"/>
    <property type="evidence" value="ECO:0007669"/>
    <property type="project" value="InterPro"/>
</dbReference>
<dbReference type="Gene3D" id="3.40.50.720">
    <property type="entry name" value="NAD(P)-binding Rossmann-like Domain"/>
    <property type="match status" value="1"/>
</dbReference>
<dbReference type="Gene3D" id="1.10.10.10">
    <property type="entry name" value="Winged helix-like DNA-binding domain superfamily/Winged helix DNA-binding domain"/>
    <property type="match status" value="1"/>
</dbReference>
<dbReference type="HAMAP" id="MF_01131">
    <property type="entry name" value="Rex"/>
    <property type="match status" value="1"/>
</dbReference>
<dbReference type="InterPro" id="IPR003781">
    <property type="entry name" value="CoA-bd"/>
</dbReference>
<dbReference type="InterPro" id="IPR036291">
    <property type="entry name" value="NAD(P)-bd_dom_sf"/>
</dbReference>
<dbReference type="InterPro" id="IPR009718">
    <property type="entry name" value="Rex_DNA-bd_C_dom"/>
</dbReference>
<dbReference type="InterPro" id="IPR022876">
    <property type="entry name" value="Tscrpt_rep_Rex"/>
</dbReference>
<dbReference type="InterPro" id="IPR036388">
    <property type="entry name" value="WH-like_DNA-bd_sf"/>
</dbReference>
<dbReference type="InterPro" id="IPR036390">
    <property type="entry name" value="WH_DNA-bd_sf"/>
</dbReference>
<dbReference type="NCBIfam" id="NF003989">
    <property type="entry name" value="PRK05472.1-3"/>
    <property type="match status" value="1"/>
</dbReference>
<dbReference type="NCBIfam" id="NF003991">
    <property type="entry name" value="PRK05472.1-5"/>
    <property type="match status" value="1"/>
</dbReference>
<dbReference type="NCBIfam" id="NF003994">
    <property type="entry name" value="PRK05472.2-3"/>
    <property type="match status" value="1"/>
</dbReference>
<dbReference type="NCBIfam" id="NF003995">
    <property type="entry name" value="PRK05472.2-4"/>
    <property type="match status" value="1"/>
</dbReference>
<dbReference type="NCBIfam" id="NF003996">
    <property type="entry name" value="PRK05472.2-5"/>
    <property type="match status" value="1"/>
</dbReference>
<dbReference type="PANTHER" id="PTHR35786">
    <property type="entry name" value="REDOX-SENSING TRANSCRIPTIONAL REPRESSOR REX"/>
    <property type="match status" value="1"/>
</dbReference>
<dbReference type="PANTHER" id="PTHR35786:SF1">
    <property type="entry name" value="REDOX-SENSING TRANSCRIPTIONAL REPRESSOR REX 1"/>
    <property type="match status" value="1"/>
</dbReference>
<dbReference type="Pfam" id="PF02629">
    <property type="entry name" value="CoA_binding"/>
    <property type="match status" value="1"/>
</dbReference>
<dbReference type="Pfam" id="PF06971">
    <property type="entry name" value="Put_DNA-bind_N"/>
    <property type="match status" value="1"/>
</dbReference>
<dbReference type="SMART" id="SM00881">
    <property type="entry name" value="CoA_binding"/>
    <property type="match status" value="1"/>
</dbReference>
<dbReference type="SUPFAM" id="SSF51735">
    <property type="entry name" value="NAD(P)-binding Rossmann-fold domains"/>
    <property type="match status" value="1"/>
</dbReference>
<dbReference type="SUPFAM" id="SSF46785">
    <property type="entry name" value="Winged helix' DNA-binding domain"/>
    <property type="match status" value="1"/>
</dbReference>
<sequence>MSDQVKIPRATLKRLPLYYRFVSSLKSKGIDRVNSKAISDALQIDSATIRRDFSYFGELGKKGYGYNIDSLLDFFKSELSESDMIKIAIVGVGNLGKALLTYNFSIHDDMTITEAFDVKEDVIGQKIGNVIVKDNDELITTLKKEEIDVVILTTPERVAQKVADELVQAGVKGILNFTPGRINTPSDVQVHQIDLGIELQSLLFFMKNYSE</sequence>
<accession>P60387</accession>
<accession>Q99SK6</accession>
<proteinExistence type="inferred from homology"/>